<feature type="chain" id="PRO_1000205127" description="Probable GTP-binding protein EngB">
    <location>
        <begin position="1"/>
        <end position="197"/>
    </location>
</feature>
<feature type="domain" description="EngB-type G" evidence="1">
    <location>
        <begin position="22"/>
        <end position="195"/>
    </location>
</feature>
<feature type="binding site" evidence="1">
    <location>
        <begin position="30"/>
        <end position="37"/>
    </location>
    <ligand>
        <name>GTP</name>
        <dbReference type="ChEBI" id="CHEBI:37565"/>
    </ligand>
</feature>
<feature type="binding site" evidence="1">
    <location>
        <position position="37"/>
    </location>
    <ligand>
        <name>Mg(2+)</name>
        <dbReference type="ChEBI" id="CHEBI:18420"/>
    </ligand>
</feature>
<feature type="binding site" evidence="1">
    <location>
        <begin position="57"/>
        <end position="61"/>
    </location>
    <ligand>
        <name>GTP</name>
        <dbReference type="ChEBI" id="CHEBI:37565"/>
    </ligand>
</feature>
<feature type="binding site" evidence="1">
    <location>
        <position position="59"/>
    </location>
    <ligand>
        <name>Mg(2+)</name>
        <dbReference type="ChEBI" id="CHEBI:18420"/>
    </ligand>
</feature>
<feature type="binding site" evidence="1">
    <location>
        <begin position="75"/>
        <end position="78"/>
    </location>
    <ligand>
        <name>GTP</name>
        <dbReference type="ChEBI" id="CHEBI:37565"/>
    </ligand>
</feature>
<feature type="binding site" evidence="1">
    <location>
        <begin position="142"/>
        <end position="145"/>
    </location>
    <ligand>
        <name>GTP</name>
        <dbReference type="ChEBI" id="CHEBI:37565"/>
    </ligand>
</feature>
<feature type="binding site" evidence="1">
    <location>
        <begin position="174"/>
        <end position="176"/>
    </location>
    <ligand>
        <name>GTP</name>
        <dbReference type="ChEBI" id="CHEBI:37565"/>
    </ligand>
</feature>
<organism>
    <name type="scientific">Exiguobacterium sp. (strain ATCC BAA-1283 / AT1b)</name>
    <dbReference type="NCBI Taxonomy" id="360911"/>
    <lineage>
        <taxon>Bacteria</taxon>
        <taxon>Bacillati</taxon>
        <taxon>Bacillota</taxon>
        <taxon>Bacilli</taxon>
        <taxon>Bacillales</taxon>
        <taxon>Bacillales Family XII. Incertae Sedis</taxon>
        <taxon>Exiguobacterium</taxon>
    </lineage>
</organism>
<sequence>MKINKAEFVTSAVAPDHYPVHELPEVALAGRSNVGKSSFINKICQRKALARTSSKPGKTQTLNFFNINDEIMFVDVPGYGYAKVSKTEREKWGVMMEQYLTSQEALRGVVLLVDIRHDPTGDDVTMYNFLKHYEIPVIVVATKLDKIKKSQRQKHEAAVKRKLQFDPSDRFVAFSAETAEGKDEAWKAIYALITEGE</sequence>
<accession>C4L4J3</accession>
<protein>
    <recommendedName>
        <fullName evidence="1">Probable GTP-binding protein EngB</fullName>
    </recommendedName>
</protein>
<dbReference type="EMBL" id="CP001615">
    <property type="protein sequence ID" value="ACQ71556.1"/>
    <property type="molecule type" value="Genomic_DNA"/>
</dbReference>
<dbReference type="SMR" id="C4L4J3"/>
<dbReference type="STRING" id="360911.EAT1b_2640"/>
<dbReference type="KEGG" id="eat:EAT1b_2640"/>
<dbReference type="eggNOG" id="COG0218">
    <property type="taxonomic scope" value="Bacteria"/>
</dbReference>
<dbReference type="HOGENOM" id="CLU_033732_3_0_9"/>
<dbReference type="OrthoDB" id="9804921at2"/>
<dbReference type="Proteomes" id="UP000000716">
    <property type="component" value="Chromosome"/>
</dbReference>
<dbReference type="GO" id="GO:0005829">
    <property type="term" value="C:cytosol"/>
    <property type="evidence" value="ECO:0007669"/>
    <property type="project" value="TreeGrafter"/>
</dbReference>
<dbReference type="GO" id="GO:0005525">
    <property type="term" value="F:GTP binding"/>
    <property type="evidence" value="ECO:0007669"/>
    <property type="project" value="UniProtKB-UniRule"/>
</dbReference>
<dbReference type="GO" id="GO:0046872">
    <property type="term" value="F:metal ion binding"/>
    <property type="evidence" value="ECO:0007669"/>
    <property type="project" value="UniProtKB-KW"/>
</dbReference>
<dbReference type="GO" id="GO:0000917">
    <property type="term" value="P:division septum assembly"/>
    <property type="evidence" value="ECO:0007669"/>
    <property type="project" value="UniProtKB-KW"/>
</dbReference>
<dbReference type="CDD" id="cd01876">
    <property type="entry name" value="YihA_EngB"/>
    <property type="match status" value="1"/>
</dbReference>
<dbReference type="FunFam" id="3.40.50.300:FF:000098">
    <property type="entry name" value="Probable GTP-binding protein EngB"/>
    <property type="match status" value="1"/>
</dbReference>
<dbReference type="Gene3D" id="3.40.50.300">
    <property type="entry name" value="P-loop containing nucleotide triphosphate hydrolases"/>
    <property type="match status" value="1"/>
</dbReference>
<dbReference type="HAMAP" id="MF_00321">
    <property type="entry name" value="GTPase_EngB"/>
    <property type="match status" value="1"/>
</dbReference>
<dbReference type="InterPro" id="IPR030393">
    <property type="entry name" value="G_ENGB_dom"/>
</dbReference>
<dbReference type="InterPro" id="IPR006073">
    <property type="entry name" value="GTP-bd"/>
</dbReference>
<dbReference type="InterPro" id="IPR019987">
    <property type="entry name" value="GTP-bd_ribosome_bio_YsxC"/>
</dbReference>
<dbReference type="InterPro" id="IPR027417">
    <property type="entry name" value="P-loop_NTPase"/>
</dbReference>
<dbReference type="InterPro" id="IPR005225">
    <property type="entry name" value="Small_GTP-bd"/>
</dbReference>
<dbReference type="NCBIfam" id="TIGR03598">
    <property type="entry name" value="GTPase_YsxC"/>
    <property type="match status" value="1"/>
</dbReference>
<dbReference type="NCBIfam" id="TIGR00231">
    <property type="entry name" value="small_GTP"/>
    <property type="match status" value="1"/>
</dbReference>
<dbReference type="PANTHER" id="PTHR11649:SF13">
    <property type="entry name" value="ENGB-TYPE G DOMAIN-CONTAINING PROTEIN"/>
    <property type="match status" value="1"/>
</dbReference>
<dbReference type="PANTHER" id="PTHR11649">
    <property type="entry name" value="MSS1/TRME-RELATED GTP-BINDING PROTEIN"/>
    <property type="match status" value="1"/>
</dbReference>
<dbReference type="Pfam" id="PF01926">
    <property type="entry name" value="MMR_HSR1"/>
    <property type="match status" value="1"/>
</dbReference>
<dbReference type="PRINTS" id="PR00449">
    <property type="entry name" value="RASTRNSFRMNG"/>
</dbReference>
<dbReference type="SUPFAM" id="SSF52540">
    <property type="entry name" value="P-loop containing nucleoside triphosphate hydrolases"/>
    <property type="match status" value="1"/>
</dbReference>
<dbReference type="PROSITE" id="PS51706">
    <property type="entry name" value="G_ENGB"/>
    <property type="match status" value="1"/>
</dbReference>
<evidence type="ECO:0000255" key="1">
    <source>
        <dbReference type="HAMAP-Rule" id="MF_00321"/>
    </source>
</evidence>
<reference key="1">
    <citation type="journal article" date="2011" name="J. Bacteriol.">
        <title>Complete genome sequence of the Thermophilic Bacterium Exiguobacterium sp. AT1b.</title>
        <authorList>
            <person name="Vishnivetskaya T.A."/>
            <person name="Lucas S."/>
            <person name="Copeland A."/>
            <person name="Lapidus A."/>
            <person name="Glavina del Rio T."/>
            <person name="Dalin E."/>
            <person name="Tice H."/>
            <person name="Bruce D.C."/>
            <person name="Goodwin L.A."/>
            <person name="Pitluck S."/>
            <person name="Saunders E."/>
            <person name="Brettin T."/>
            <person name="Detter C."/>
            <person name="Han C."/>
            <person name="Larimer F."/>
            <person name="Land M.L."/>
            <person name="Hauser L.J."/>
            <person name="Kyrpides N.C."/>
            <person name="Ovchinnikova G."/>
            <person name="Kathariou S."/>
            <person name="Ramaley R.F."/>
            <person name="Rodrigues D.F."/>
            <person name="Hendrix C."/>
            <person name="Richardson P."/>
            <person name="Tiedje J.M."/>
        </authorList>
    </citation>
    <scope>NUCLEOTIDE SEQUENCE [LARGE SCALE GENOMIC DNA]</scope>
    <source>
        <strain>ATCC BAA-1283 / AT1b</strain>
    </source>
</reference>
<comment type="function">
    <text evidence="1">Necessary for normal cell division and for the maintenance of normal septation.</text>
</comment>
<comment type="cofactor">
    <cofactor evidence="1">
        <name>Mg(2+)</name>
        <dbReference type="ChEBI" id="CHEBI:18420"/>
    </cofactor>
</comment>
<comment type="similarity">
    <text evidence="1">Belongs to the TRAFAC class TrmE-Era-EngA-EngB-Septin-like GTPase superfamily. EngB GTPase family.</text>
</comment>
<name>ENGB_EXISA</name>
<gene>
    <name evidence="1" type="primary">engB</name>
    <name type="ordered locus">EAT1b_2640</name>
</gene>
<keyword id="KW-0131">Cell cycle</keyword>
<keyword id="KW-0132">Cell division</keyword>
<keyword id="KW-0342">GTP-binding</keyword>
<keyword id="KW-0460">Magnesium</keyword>
<keyword id="KW-0479">Metal-binding</keyword>
<keyword id="KW-0547">Nucleotide-binding</keyword>
<keyword id="KW-0717">Septation</keyword>
<proteinExistence type="inferred from homology"/>